<reference key="1">
    <citation type="journal article" date="1984" name="Curr. Genet.">
        <title>The primary structure of a gene encoding yeast ribosomal protein L34.</title>
        <authorList>
            <person name="Schaap P.J."/>
            <person name="Molenaar C.M.T."/>
            <person name="Mager W.H."/>
            <person name="Planta R.J."/>
        </authorList>
    </citation>
    <scope>NUCLEOTIDE SEQUENCE [GENOMIC DNA]</scope>
    <source>
        <strain>Carlsbergensis</strain>
    </source>
</reference>
<reference key="2">
    <citation type="journal article" date="1997" name="Nature">
        <title>The nucleotide sequence of Saccharomyces cerevisiae chromosome IV.</title>
        <authorList>
            <person name="Jacq C."/>
            <person name="Alt-Moerbe J."/>
            <person name="Andre B."/>
            <person name="Arnold W."/>
            <person name="Bahr A."/>
            <person name="Ballesta J.P.G."/>
            <person name="Bargues M."/>
            <person name="Baron L."/>
            <person name="Becker A."/>
            <person name="Biteau N."/>
            <person name="Bloecker H."/>
            <person name="Blugeon C."/>
            <person name="Boskovic J."/>
            <person name="Brandt P."/>
            <person name="Brueckner M."/>
            <person name="Buitrago M.J."/>
            <person name="Coster F."/>
            <person name="Delaveau T."/>
            <person name="del Rey F."/>
            <person name="Dujon B."/>
            <person name="Eide L.G."/>
            <person name="Garcia-Cantalejo J.M."/>
            <person name="Goffeau A."/>
            <person name="Gomez-Peris A."/>
            <person name="Granotier C."/>
            <person name="Hanemann V."/>
            <person name="Hankeln T."/>
            <person name="Hoheisel J.D."/>
            <person name="Jaeger W."/>
            <person name="Jimenez A."/>
            <person name="Jonniaux J.-L."/>
            <person name="Kraemer C."/>
            <person name="Kuester H."/>
            <person name="Laamanen P."/>
            <person name="Legros Y."/>
            <person name="Louis E.J."/>
            <person name="Moeller-Rieker S."/>
            <person name="Monnet A."/>
            <person name="Moro M."/>
            <person name="Mueller-Auer S."/>
            <person name="Nussbaumer B."/>
            <person name="Paricio N."/>
            <person name="Paulin L."/>
            <person name="Perea J."/>
            <person name="Perez-Alonso M."/>
            <person name="Perez-Ortin J.E."/>
            <person name="Pohl T.M."/>
            <person name="Prydz H."/>
            <person name="Purnelle B."/>
            <person name="Rasmussen S.W."/>
            <person name="Remacha M.A."/>
            <person name="Revuelta J.L."/>
            <person name="Rieger M."/>
            <person name="Salom D."/>
            <person name="Saluz H.P."/>
            <person name="Saiz J.E."/>
            <person name="Saren A.-M."/>
            <person name="Schaefer M."/>
            <person name="Scharfe M."/>
            <person name="Schmidt E.R."/>
            <person name="Schneider C."/>
            <person name="Scholler P."/>
            <person name="Schwarz S."/>
            <person name="Soler-Mira A."/>
            <person name="Urrestarazu L.A."/>
            <person name="Verhasselt P."/>
            <person name="Vissers S."/>
            <person name="Voet M."/>
            <person name="Volckaert G."/>
            <person name="Wagner G."/>
            <person name="Wambutt R."/>
            <person name="Wedler E."/>
            <person name="Wedler H."/>
            <person name="Woelfl S."/>
            <person name="Harris D.E."/>
            <person name="Bowman S."/>
            <person name="Brown D."/>
            <person name="Churcher C.M."/>
            <person name="Connor R."/>
            <person name="Dedman K."/>
            <person name="Gentles S."/>
            <person name="Hamlin N."/>
            <person name="Hunt S."/>
            <person name="Jones L."/>
            <person name="McDonald S."/>
            <person name="Murphy L.D."/>
            <person name="Niblett D."/>
            <person name="Odell C."/>
            <person name="Oliver K."/>
            <person name="Rajandream M.A."/>
            <person name="Richards C."/>
            <person name="Shore L."/>
            <person name="Walsh S.V."/>
            <person name="Barrell B.G."/>
            <person name="Dietrich F.S."/>
            <person name="Mulligan J.T."/>
            <person name="Allen E."/>
            <person name="Araujo R."/>
            <person name="Aviles E."/>
            <person name="Berno A."/>
            <person name="Carpenter J."/>
            <person name="Chen E."/>
            <person name="Cherry J.M."/>
            <person name="Chung E."/>
            <person name="Duncan M."/>
            <person name="Hunicke-Smith S."/>
            <person name="Hyman R.W."/>
            <person name="Komp C."/>
            <person name="Lashkari D."/>
            <person name="Lew H."/>
            <person name="Lin D."/>
            <person name="Mosedale D."/>
            <person name="Nakahara K."/>
            <person name="Namath A."/>
            <person name="Oefner P."/>
            <person name="Oh C."/>
            <person name="Petel F.X."/>
            <person name="Roberts D."/>
            <person name="Schramm S."/>
            <person name="Schroeder M."/>
            <person name="Shogren T."/>
            <person name="Shroff N."/>
            <person name="Winant A."/>
            <person name="Yelton M.A."/>
            <person name="Botstein D."/>
            <person name="Davis R.W."/>
            <person name="Johnston M."/>
            <person name="Andrews S."/>
            <person name="Brinkman R."/>
            <person name="Cooper J."/>
            <person name="Ding H."/>
            <person name="Du Z."/>
            <person name="Favello A."/>
            <person name="Fulton L."/>
            <person name="Gattung S."/>
            <person name="Greco T."/>
            <person name="Hallsworth K."/>
            <person name="Hawkins J."/>
            <person name="Hillier L.W."/>
            <person name="Jier M."/>
            <person name="Johnson D."/>
            <person name="Johnston L."/>
            <person name="Kirsten J."/>
            <person name="Kucaba T."/>
            <person name="Langston Y."/>
            <person name="Latreille P."/>
            <person name="Le T."/>
            <person name="Mardis E."/>
            <person name="Menezes S."/>
            <person name="Miller N."/>
            <person name="Nhan M."/>
            <person name="Pauley A."/>
            <person name="Peluso D."/>
            <person name="Rifkin L."/>
            <person name="Riles L."/>
            <person name="Taich A."/>
            <person name="Trevaskis E."/>
            <person name="Vignati D."/>
            <person name="Wilcox L."/>
            <person name="Wohldman P."/>
            <person name="Vaudin M."/>
            <person name="Wilson R."/>
            <person name="Waterston R."/>
            <person name="Albermann K."/>
            <person name="Hani J."/>
            <person name="Heumann K."/>
            <person name="Kleine K."/>
            <person name="Mewes H.-W."/>
            <person name="Zollner A."/>
            <person name="Zaccaria P."/>
        </authorList>
    </citation>
    <scope>NUCLEOTIDE SEQUENCE [LARGE SCALE GENOMIC DNA]</scope>
    <source>
        <strain>ATCC 204508 / S288c</strain>
    </source>
</reference>
<reference key="3">
    <citation type="journal article" date="2014" name="G3 (Bethesda)">
        <title>The reference genome sequence of Saccharomyces cerevisiae: Then and now.</title>
        <authorList>
            <person name="Engel S.R."/>
            <person name="Dietrich F.S."/>
            <person name="Fisk D.G."/>
            <person name="Binkley G."/>
            <person name="Balakrishnan R."/>
            <person name="Costanzo M.C."/>
            <person name="Dwight S.S."/>
            <person name="Hitz B.C."/>
            <person name="Karra K."/>
            <person name="Nash R.S."/>
            <person name="Weng S."/>
            <person name="Wong E.D."/>
            <person name="Lloyd P."/>
            <person name="Skrzypek M.S."/>
            <person name="Miyasato S.R."/>
            <person name="Simison M."/>
            <person name="Cherry J.M."/>
        </authorList>
    </citation>
    <scope>GENOME REANNOTATION</scope>
    <source>
        <strain>ATCC 204508 / S288c</strain>
    </source>
</reference>
<reference key="4">
    <citation type="journal article" date="1984" name="Mol. Gen. Genet.">
        <title>Yeast ribosomal proteins. VIII. Isolation of two proteins and sequence characterization of twenty-four proteins from cytoplasmic ribosomes.</title>
        <authorList>
            <person name="Otaka E."/>
            <person name="Higo K."/>
            <person name="Itoh T."/>
        </authorList>
    </citation>
    <scope>PARTIAL PROTEIN SEQUENCE OF 2-51</scope>
    <scope>CLEAVAGE OF INITIATOR METHIONINE</scope>
</reference>
<reference key="5">
    <citation type="journal article" date="1999" name="J. Biol. Chem.">
        <title>The action of N-terminal acetyltransferases on yeast ribosomal proteins.</title>
        <authorList>
            <person name="Arnold R.J."/>
            <person name="Polevoda B."/>
            <person name="Reilly J.P."/>
            <person name="Sherman F."/>
        </authorList>
    </citation>
    <scope>CLEAVAGE OF INITIATOR METHIONINE</scope>
</reference>
<reference key="6">
    <citation type="journal article" date="2014" name="Curr. Opin. Struct. Biol.">
        <title>A new system for naming ribosomal proteins.</title>
        <authorList>
            <person name="Ban N."/>
            <person name="Beckmann R."/>
            <person name="Cate J.H.D."/>
            <person name="Dinman J.D."/>
            <person name="Dragon F."/>
            <person name="Ellis S.R."/>
            <person name="Lafontaine D.L.J."/>
            <person name="Lindahl L."/>
            <person name="Liljas A."/>
            <person name="Lipton J.M."/>
            <person name="McAlear M.A."/>
            <person name="Moore P.B."/>
            <person name="Noller H.F."/>
            <person name="Ortega J."/>
            <person name="Panse V.G."/>
            <person name="Ramakrishnan V."/>
            <person name="Spahn C.M.T."/>
            <person name="Steitz T.A."/>
            <person name="Tchorzewski M."/>
            <person name="Tollervey D."/>
            <person name="Warren A.J."/>
            <person name="Williamson J.R."/>
            <person name="Wilson D."/>
            <person name="Yonath A."/>
            <person name="Yusupov M."/>
        </authorList>
    </citation>
    <scope>NOMENCLATURE</scope>
</reference>
<reference key="7">
    <citation type="journal article" date="2001" name="Cell">
        <title>Structure of the 80S ribosome from Saccharomyces cerevisiae -- tRNA-ribosome and subunit-subunit interactions.</title>
        <authorList>
            <person name="Spahn C.M.T."/>
            <person name="Beckmann R."/>
            <person name="Eswar N."/>
            <person name="Penczek P.A."/>
            <person name="Sali A."/>
            <person name="Blobel G."/>
            <person name="Frank J."/>
        </authorList>
    </citation>
    <scope>3D-STRUCTURE MODELING OF 6-83</scope>
    <scope>ELECTRON MICROSCOPY</scope>
</reference>
<reference key="8">
    <citation type="journal article" date="2004" name="EMBO J.">
        <title>Domain movements of elongation factor eEF2 and the eukaryotic 80S ribosome facilitate tRNA translocation.</title>
        <authorList>
            <person name="Spahn C.M.T."/>
            <person name="Gomez-Lorenzo M.G."/>
            <person name="Grassucci R.A."/>
            <person name="Joergensen R."/>
            <person name="Andersen G.R."/>
            <person name="Beckmann R."/>
            <person name="Penczek P.A."/>
            <person name="Ballesta J.P.G."/>
            <person name="Frank J."/>
        </authorList>
    </citation>
    <scope>3D-STRUCTURE MODELING</scope>
    <scope>ELECTRON MICROSCOPY</scope>
</reference>
<reference key="9">
    <citation type="journal article" date="1998" name="Yeast">
        <title>The list of cytoplasmic ribosomal proteins of Saccharomyces cerevisiae.</title>
        <authorList>
            <person name="Planta R.J."/>
            <person name="Mager W.H."/>
        </authorList>
    </citation>
    <scope>NOMENCLATURE</scope>
    <scope>SUBUNIT</scope>
</reference>
<reference key="10">
    <citation type="journal article" date="2010" name="Science">
        <title>Crystal structure of the eukaryotic ribosome.</title>
        <authorList>
            <person name="Ben-Shem A."/>
            <person name="Jenner L."/>
            <person name="Yusupova G."/>
            <person name="Yusupov M."/>
        </authorList>
    </citation>
    <scope>X-RAY CRYSTALLOGRAPHY (4.0 ANGSTROMS) OF 80S RIBOSOME</scope>
</reference>
<reference key="11">
    <citation type="journal article" date="2011" name="Science">
        <title>The structure of the eukaryotic ribosome at 3.0 A resolution.</title>
        <authorList>
            <person name="Ben-Shem A."/>
            <person name="Garreau de Loubresse N."/>
            <person name="Melnikov S."/>
            <person name="Jenner L."/>
            <person name="Yusupova G."/>
            <person name="Yusupov M."/>
        </authorList>
    </citation>
    <scope>X-RAY CRYSTALLOGRAPHY (3.0 ANGSTROMS) OF 80S RIBOSOME</scope>
    <scope>SUBUNIT</scope>
    <scope>SUBCELLULAR LOCATION</scope>
</reference>
<comment type="function">
    <text evidence="7">Component of the ribosome, a large ribonucleoprotein complex responsible for the synthesis of proteins in the cell. The small ribosomal subunit (SSU) binds messenger RNAs (mRNAs) and translates the encoded message by selecting cognate aminoacyl-transfer RNA (tRNA) molecules. The large subunit (LSU) contains the ribosomal catalytic site termed the peptidyl transferase center (PTC), which catalyzes the formation of peptide bonds, thereby polymerizing the amino acids delivered by tRNAs into a polypeptide chain. The nascent polypeptides leave the ribosome through a tunnel in the LSU and interact with protein factors that function in enzymatic processing, targeting, and the membrane insertion of nascent chains at the exit of the ribosomal tunnel.</text>
</comment>
<comment type="subunit">
    <text evidence="3 8">Component of the large ribosomal subunit (LSU). Mature yeast ribosomes consist of a small (40S) and a large (60S) subunit. The 40S small subunit contains 1 molecule of ribosomal RNA (18S rRNA) and 33 different proteins (encoded by 57 genes). The large 60S subunit contains 3 rRNA molecules (25S, 5.8S and 5S rRNA) and 46 different proteins (encoded by 81 genes) (PubMed:22096102, PubMed:9559554).</text>
</comment>
<comment type="subcellular location">
    <subcellularLocation>
        <location evidence="3">Cytoplasm</location>
    </subcellularLocation>
</comment>
<comment type="miscellaneous">
    <text evidence="6">There are 2 genes for eL31 in yeast.</text>
</comment>
<comment type="similarity">
    <text evidence="6">Belongs to the eukaryotic ribosomal protein eL31 family.</text>
</comment>
<gene>
    <name evidence="5" type="primary">RPL31A</name>
    <name type="synonym">RPL34</name>
    <name type="synonym">RPL34A</name>
    <name type="ordered locus">YDL075W</name>
    <name type="ORF">D2478</name>
</gene>
<feature type="initiator methionine" description="Removed" evidence="1 2">
    <location>
        <position position="1"/>
    </location>
</feature>
<feature type="chain" id="PRO_0000153788" description="Large ribosomal subunit protein eL31A">
    <location>
        <begin position="2"/>
        <end position="113"/>
    </location>
</feature>
<feature type="strand" evidence="9">
    <location>
        <begin position="12"/>
        <end position="15"/>
    </location>
</feature>
<feature type="helix" evidence="9">
    <location>
        <begin position="16"/>
        <end position="19"/>
    </location>
</feature>
<feature type="turn" evidence="9">
    <location>
        <begin position="20"/>
        <end position="22"/>
    </location>
</feature>
<feature type="helix" evidence="9">
    <location>
        <begin position="25"/>
        <end position="27"/>
    </location>
</feature>
<feature type="helix" evidence="9">
    <location>
        <begin position="28"/>
        <end position="43"/>
    </location>
</feature>
<feature type="helix" evidence="9">
    <location>
        <begin position="53"/>
        <end position="59"/>
    </location>
</feature>
<feature type="turn" evidence="10">
    <location>
        <begin position="60"/>
        <end position="62"/>
    </location>
</feature>
<feature type="turn" evidence="9">
    <location>
        <begin position="63"/>
        <end position="65"/>
    </location>
</feature>
<feature type="strand" evidence="9">
    <location>
        <begin position="69"/>
        <end position="75"/>
    </location>
</feature>
<feature type="strand" evidence="9">
    <location>
        <begin position="93"/>
        <end position="95"/>
    </location>
</feature>
<evidence type="ECO:0000269" key="1">
    <source>
    </source>
</evidence>
<evidence type="ECO:0000269" key="2">
    <source>
    </source>
</evidence>
<evidence type="ECO:0000269" key="3">
    <source>
    </source>
</evidence>
<evidence type="ECO:0000303" key="4">
    <source>
    </source>
</evidence>
<evidence type="ECO:0000303" key="5">
    <source>
    </source>
</evidence>
<evidence type="ECO:0000305" key="6"/>
<evidence type="ECO:0000305" key="7">
    <source>
    </source>
</evidence>
<evidence type="ECO:0000305" key="8">
    <source>
    </source>
</evidence>
<evidence type="ECO:0007829" key="9">
    <source>
        <dbReference type="PDB" id="7NAD"/>
    </source>
</evidence>
<evidence type="ECO:0007829" key="10">
    <source>
        <dbReference type="PDB" id="7R72"/>
    </source>
</evidence>
<sequence length="113" mass="12953">MAGLKDVVTREYTINLHKRLHGVSFKKRAPRAVKEIKKFAKLHMGTDDVRLAPELNQAIWKRGVKGVEYRLRLRISRKRNEEEDAKNPLFSYVEPVLVASAKGLQTVVVEEDA</sequence>
<protein>
    <recommendedName>
        <fullName evidence="4">Large ribosomal subunit protein eL31A</fullName>
    </recommendedName>
    <alternativeName>
        <fullName evidence="5">60S ribosomal protein L31-A</fullName>
    </alternativeName>
    <alternativeName>
        <fullName>L34</fullName>
    </alternativeName>
    <alternativeName>
        <fullName>YL28</fullName>
    </alternativeName>
</protein>
<keyword id="KW-0002">3D-structure</keyword>
<keyword id="KW-0963">Cytoplasm</keyword>
<keyword id="KW-0903">Direct protein sequencing</keyword>
<keyword id="KW-1185">Reference proteome</keyword>
<keyword id="KW-0687">Ribonucleoprotein</keyword>
<keyword id="KW-0689">Ribosomal protein</keyword>
<organism>
    <name type="scientific">Saccharomyces cerevisiae (strain ATCC 204508 / S288c)</name>
    <name type="common">Baker's yeast</name>
    <dbReference type="NCBI Taxonomy" id="559292"/>
    <lineage>
        <taxon>Eukaryota</taxon>
        <taxon>Fungi</taxon>
        <taxon>Dikarya</taxon>
        <taxon>Ascomycota</taxon>
        <taxon>Saccharomycotina</taxon>
        <taxon>Saccharomycetes</taxon>
        <taxon>Saccharomycetales</taxon>
        <taxon>Saccharomycetaceae</taxon>
        <taxon>Saccharomyces</taxon>
    </lineage>
</organism>
<accession>P0C2H8</accession>
<accession>D6VRS4</accession>
<accession>P04649</accession>
<accession>Q3E7B8</accession>
<name>RL31A_YEAST</name>
<proteinExistence type="evidence at protein level"/>
<dbReference type="EMBL" id="X01441">
    <property type="protein sequence ID" value="CAA25679.1"/>
    <property type="molecule type" value="Genomic_DNA"/>
</dbReference>
<dbReference type="EMBL" id="Z74123">
    <property type="protein sequence ID" value="CAA98641.1"/>
    <property type="molecule type" value="Genomic_DNA"/>
</dbReference>
<dbReference type="EMBL" id="BK006938">
    <property type="protein sequence ID" value="DAA11784.1"/>
    <property type="molecule type" value="Genomic_DNA"/>
</dbReference>
<dbReference type="PIR" id="S67611">
    <property type="entry name" value="R5BY1E"/>
</dbReference>
<dbReference type="RefSeq" id="NP_010208.1">
    <property type="nucleotide sequence ID" value="NM_001180134.1"/>
</dbReference>
<dbReference type="PDB" id="2WW9">
    <property type="method" value="EM"/>
    <property type="resolution" value="8.60 A"/>
    <property type="chains" value="M=1-113"/>
</dbReference>
<dbReference type="PDB" id="2WWA">
    <property type="method" value="EM"/>
    <property type="resolution" value="8.90 A"/>
    <property type="chains" value="M=1-113"/>
</dbReference>
<dbReference type="PDB" id="2WWB">
    <property type="method" value="EM"/>
    <property type="resolution" value="6.48 A"/>
    <property type="chains" value="M=1-113"/>
</dbReference>
<dbReference type="PDB" id="3J6X">
    <property type="method" value="EM"/>
    <property type="resolution" value="6.10 A"/>
    <property type="chains" value="71=1-113"/>
</dbReference>
<dbReference type="PDB" id="3J6Y">
    <property type="method" value="EM"/>
    <property type="resolution" value="6.10 A"/>
    <property type="chains" value="71=1-113"/>
</dbReference>
<dbReference type="PDB" id="3J77">
    <property type="method" value="EM"/>
    <property type="resolution" value="6.20 A"/>
    <property type="chains" value="81=1-113"/>
</dbReference>
<dbReference type="PDB" id="3J78">
    <property type="method" value="EM"/>
    <property type="resolution" value="6.30 A"/>
    <property type="chains" value="81=1-113"/>
</dbReference>
<dbReference type="PDB" id="3JCT">
    <property type="method" value="EM"/>
    <property type="resolution" value="3.08 A"/>
    <property type="chains" value="d=1-113"/>
</dbReference>
<dbReference type="PDB" id="4U3M">
    <property type="method" value="X-ray"/>
    <property type="resolution" value="3.00 A"/>
    <property type="chains" value="O1/o1=2-113"/>
</dbReference>
<dbReference type="PDB" id="4U3N">
    <property type="method" value="X-ray"/>
    <property type="resolution" value="3.20 A"/>
    <property type="chains" value="O1/o1=2-113"/>
</dbReference>
<dbReference type="PDB" id="4U3U">
    <property type="method" value="X-ray"/>
    <property type="resolution" value="2.90 A"/>
    <property type="chains" value="O1/o1=2-113"/>
</dbReference>
<dbReference type="PDB" id="4U4N">
    <property type="method" value="X-ray"/>
    <property type="resolution" value="3.10 A"/>
    <property type="chains" value="O1/o1=2-113"/>
</dbReference>
<dbReference type="PDB" id="4U4O">
    <property type="method" value="X-ray"/>
    <property type="resolution" value="3.60 A"/>
    <property type="chains" value="O1/o1=2-113"/>
</dbReference>
<dbReference type="PDB" id="4U4Q">
    <property type="method" value="X-ray"/>
    <property type="resolution" value="3.00 A"/>
    <property type="chains" value="O1/o1=2-113"/>
</dbReference>
<dbReference type="PDB" id="4U4R">
    <property type="method" value="X-ray"/>
    <property type="resolution" value="2.80 A"/>
    <property type="chains" value="O1/o1=2-113"/>
</dbReference>
<dbReference type="PDB" id="4U4U">
    <property type="method" value="X-ray"/>
    <property type="resolution" value="3.00 A"/>
    <property type="chains" value="O1/o1=2-113"/>
</dbReference>
<dbReference type="PDB" id="4U4Y">
    <property type="method" value="X-ray"/>
    <property type="resolution" value="3.20 A"/>
    <property type="chains" value="O1/o1=2-113"/>
</dbReference>
<dbReference type="PDB" id="4U4Z">
    <property type="method" value="X-ray"/>
    <property type="resolution" value="3.10 A"/>
    <property type="chains" value="O1/o1=2-113"/>
</dbReference>
<dbReference type="PDB" id="4U50">
    <property type="method" value="X-ray"/>
    <property type="resolution" value="3.20 A"/>
    <property type="chains" value="O1/o1=2-113"/>
</dbReference>
<dbReference type="PDB" id="4U51">
    <property type="method" value="X-ray"/>
    <property type="resolution" value="3.20 A"/>
    <property type="chains" value="O1/o1=2-113"/>
</dbReference>
<dbReference type="PDB" id="4U52">
    <property type="method" value="X-ray"/>
    <property type="resolution" value="3.00 A"/>
    <property type="chains" value="O1/o1=2-113"/>
</dbReference>
<dbReference type="PDB" id="4U53">
    <property type="method" value="X-ray"/>
    <property type="resolution" value="3.30 A"/>
    <property type="chains" value="O1/o1=2-113"/>
</dbReference>
<dbReference type="PDB" id="4U55">
    <property type="method" value="X-ray"/>
    <property type="resolution" value="3.20 A"/>
    <property type="chains" value="O1/o1=2-113"/>
</dbReference>
<dbReference type="PDB" id="4U56">
    <property type="method" value="X-ray"/>
    <property type="resolution" value="3.45 A"/>
    <property type="chains" value="O1/o1=2-113"/>
</dbReference>
<dbReference type="PDB" id="4U6F">
    <property type="method" value="X-ray"/>
    <property type="resolution" value="3.10 A"/>
    <property type="chains" value="O1/o1=2-113"/>
</dbReference>
<dbReference type="PDB" id="4V4B">
    <property type="method" value="EM"/>
    <property type="resolution" value="11.70 A"/>
    <property type="chains" value="BW=2-113"/>
</dbReference>
<dbReference type="PDB" id="4V5Z">
    <property type="method" value="EM"/>
    <property type="resolution" value="8.70 A"/>
    <property type="chains" value="Bx=2-112"/>
</dbReference>
<dbReference type="PDB" id="4V6I">
    <property type="method" value="EM"/>
    <property type="resolution" value="8.80 A"/>
    <property type="chains" value="Bg=1-113"/>
</dbReference>
<dbReference type="PDB" id="4V7F">
    <property type="method" value="EM"/>
    <property type="resolution" value="8.70 A"/>
    <property type="chains" value="c=1-113"/>
</dbReference>
<dbReference type="PDB" id="4V7R">
    <property type="method" value="X-ray"/>
    <property type="resolution" value="4.00 A"/>
    <property type="chains" value="Ba/Da=1-113"/>
</dbReference>
<dbReference type="PDB" id="4V88">
    <property type="method" value="X-ray"/>
    <property type="resolution" value="3.00 A"/>
    <property type="chains" value="Bd/Dd=1-113"/>
</dbReference>
<dbReference type="PDB" id="4V8T">
    <property type="method" value="EM"/>
    <property type="resolution" value="8.10 A"/>
    <property type="chains" value="d=1-113"/>
</dbReference>
<dbReference type="PDB" id="4V8Y">
    <property type="method" value="EM"/>
    <property type="resolution" value="4.30 A"/>
    <property type="chains" value="Bd=2-113"/>
</dbReference>
<dbReference type="PDB" id="4V8Z">
    <property type="method" value="EM"/>
    <property type="resolution" value="6.60 A"/>
    <property type="chains" value="Bd=2-113"/>
</dbReference>
<dbReference type="PDB" id="4V91">
    <property type="method" value="EM"/>
    <property type="resolution" value="3.70 A"/>
    <property type="chains" value="d=1-113"/>
</dbReference>
<dbReference type="PDB" id="5APN">
    <property type="method" value="EM"/>
    <property type="resolution" value="3.91 A"/>
    <property type="chains" value="d=1-113"/>
</dbReference>
<dbReference type="PDB" id="5APO">
    <property type="method" value="EM"/>
    <property type="resolution" value="3.41 A"/>
    <property type="chains" value="d=1-113"/>
</dbReference>
<dbReference type="PDB" id="5DAT">
    <property type="method" value="X-ray"/>
    <property type="resolution" value="3.15 A"/>
    <property type="chains" value="O1/o1=2-113"/>
</dbReference>
<dbReference type="PDB" id="5DC3">
    <property type="method" value="X-ray"/>
    <property type="resolution" value="3.25 A"/>
    <property type="chains" value="O1/o1=2-113"/>
</dbReference>
<dbReference type="PDB" id="5DGE">
    <property type="method" value="X-ray"/>
    <property type="resolution" value="3.45 A"/>
    <property type="chains" value="O1/o1=2-113"/>
</dbReference>
<dbReference type="PDB" id="5DGF">
    <property type="method" value="X-ray"/>
    <property type="resolution" value="3.30 A"/>
    <property type="chains" value="O1/o1=2-113"/>
</dbReference>
<dbReference type="PDB" id="5DGV">
    <property type="method" value="X-ray"/>
    <property type="resolution" value="3.10 A"/>
    <property type="chains" value="O1/o1=2-113"/>
</dbReference>
<dbReference type="PDB" id="5FCI">
    <property type="method" value="X-ray"/>
    <property type="resolution" value="3.40 A"/>
    <property type="chains" value="O1/o1=2-113"/>
</dbReference>
<dbReference type="PDB" id="5FCJ">
    <property type="method" value="X-ray"/>
    <property type="resolution" value="3.10 A"/>
    <property type="chains" value="O1/o1=2-113"/>
</dbReference>
<dbReference type="PDB" id="5GAK">
    <property type="method" value="EM"/>
    <property type="resolution" value="3.88 A"/>
    <property type="chains" value="f=4-112"/>
</dbReference>
<dbReference type="PDB" id="5H4P">
    <property type="method" value="EM"/>
    <property type="resolution" value="3.07 A"/>
    <property type="chains" value="d=1-113"/>
</dbReference>
<dbReference type="PDB" id="5I4L">
    <property type="method" value="X-ray"/>
    <property type="resolution" value="3.10 A"/>
    <property type="chains" value="O1/o1=4-112"/>
</dbReference>
<dbReference type="PDB" id="5JCS">
    <property type="method" value="EM"/>
    <property type="resolution" value="9.50 A"/>
    <property type="chains" value="d=1-113"/>
</dbReference>
<dbReference type="PDB" id="5JUO">
    <property type="method" value="EM"/>
    <property type="resolution" value="4.00 A"/>
    <property type="chains" value="IA=1-113"/>
</dbReference>
<dbReference type="PDB" id="5JUP">
    <property type="method" value="EM"/>
    <property type="resolution" value="3.50 A"/>
    <property type="chains" value="IA=1-113"/>
</dbReference>
<dbReference type="PDB" id="5JUS">
    <property type="method" value="EM"/>
    <property type="resolution" value="4.20 A"/>
    <property type="chains" value="IA=1-113"/>
</dbReference>
<dbReference type="PDB" id="5JUT">
    <property type="method" value="EM"/>
    <property type="resolution" value="4.00 A"/>
    <property type="chains" value="IA=1-113"/>
</dbReference>
<dbReference type="PDB" id="5JUU">
    <property type="method" value="EM"/>
    <property type="resolution" value="4.00 A"/>
    <property type="chains" value="IA=1-113"/>
</dbReference>
<dbReference type="PDB" id="5LYB">
    <property type="method" value="X-ray"/>
    <property type="resolution" value="3.25 A"/>
    <property type="chains" value="O1/o1=4-112"/>
</dbReference>
<dbReference type="PDB" id="5M1J">
    <property type="method" value="EM"/>
    <property type="resolution" value="3.30 A"/>
    <property type="chains" value="d5=4-112"/>
</dbReference>
<dbReference type="PDB" id="5MC6">
    <property type="method" value="EM"/>
    <property type="resolution" value="3.80 A"/>
    <property type="chains" value="BC=1-113"/>
</dbReference>
<dbReference type="PDB" id="5MEI">
    <property type="method" value="X-ray"/>
    <property type="resolution" value="3.50 A"/>
    <property type="chains" value="AE/DF=4-112"/>
</dbReference>
<dbReference type="PDB" id="5NDG">
    <property type="method" value="X-ray"/>
    <property type="resolution" value="3.70 A"/>
    <property type="chains" value="O1/o1=4-112"/>
</dbReference>
<dbReference type="PDB" id="5NDV">
    <property type="method" value="X-ray"/>
    <property type="resolution" value="3.30 A"/>
    <property type="chains" value="O1/o1=2-113"/>
</dbReference>
<dbReference type="PDB" id="5NDW">
    <property type="method" value="X-ray"/>
    <property type="resolution" value="3.70 A"/>
    <property type="chains" value="O1/o1=4-112"/>
</dbReference>
<dbReference type="PDB" id="5OBM">
    <property type="method" value="X-ray"/>
    <property type="resolution" value="3.40 A"/>
    <property type="chains" value="O1/o1=4-112"/>
</dbReference>
<dbReference type="PDB" id="5ON6">
    <property type="method" value="X-ray"/>
    <property type="resolution" value="3.10 A"/>
    <property type="chains" value="AE/DF=4-112"/>
</dbReference>
<dbReference type="PDB" id="5T62">
    <property type="method" value="EM"/>
    <property type="resolution" value="3.30 A"/>
    <property type="chains" value="q=1-113"/>
</dbReference>
<dbReference type="PDB" id="5T6R">
    <property type="method" value="EM"/>
    <property type="resolution" value="4.50 A"/>
    <property type="chains" value="q=1-113"/>
</dbReference>
<dbReference type="PDB" id="5TBW">
    <property type="method" value="X-ray"/>
    <property type="resolution" value="3.00 A"/>
    <property type="chains" value="AE/DF=4-112"/>
</dbReference>
<dbReference type="PDB" id="5TGA">
    <property type="method" value="X-ray"/>
    <property type="resolution" value="3.30 A"/>
    <property type="chains" value="O1/o1=4-112"/>
</dbReference>
<dbReference type="PDB" id="5TGM">
    <property type="method" value="X-ray"/>
    <property type="resolution" value="3.50 A"/>
    <property type="chains" value="O1/o1=4-112"/>
</dbReference>
<dbReference type="PDB" id="6ELZ">
    <property type="method" value="EM"/>
    <property type="resolution" value="3.30 A"/>
    <property type="chains" value="d=1-113"/>
</dbReference>
<dbReference type="PDB" id="6EM5">
    <property type="method" value="EM"/>
    <property type="resolution" value="4.30 A"/>
    <property type="chains" value="d=1-113"/>
</dbReference>
<dbReference type="PDB" id="6FT6">
    <property type="method" value="EM"/>
    <property type="resolution" value="3.90 A"/>
    <property type="chains" value="d=1-113"/>
</dbReference>
<dbReference type="PDB" id="6GQ1">
    <property type="method" value="EM"/>
    <property type="resolution" value="4.40 A"/>
    <property type="chains" value="d=4-112"/>
</dbReference>
<dbReference type="PDB" id="6GQB">
    <property type="method" value="EM"/>
    <property type="resolution" value="3.90 A"/>
    <property type="chains" value="d=4-112"/>
</dbReference>
<dbReference type="PDB" id="6GQV">
    <property type="method" value="EM"/>
    <property type="resolution" value="4.00 A"/>
    <property type="chains" value="d=4-112"/>
</dbReference>
<dbReference type="PDB" id="6HD7">
    <property type="method" value="EM"/>
    <property type="resolution" value="3.40 A"/>
    <property type="chains" value="f=4-112"/>
</dbReference>
<dbReference type="PDB" id="6HHQ">
    <property type="method" value="X-ray"/>
    <property type="resolution" value="3.10 A"/>
    <property type="chains" value="AE/DF=1-113"/>
</dbReference>
<dbReference type="PDB" id="6I7O">
    <property type="method" value="EM"/>
    <property type="resolution" value="5.30 A"/>
    <property type="chains" value="BC/YC=4-112"/>
</dbReference>
<dbReference type="PDB" id="6M62">
    <property type="method" value="EM"/>
    <property type="resolution" value="3.20 A"/>
    <property type="chains" value="d=1-113"/>
</dbReference>
<dbReference type="PDB" id="6N8J">
    <property type="method" value="EM"/>
    <property type="resolution" value="3.50 A"/>
    <property type="chains" value="d=1-113"/>
</dbReference>
<dbReference type="PDB" id="6N8K">
    <property type="method" value="EM"/>
    <property type="resolution" value="3.60 A"/>
    <property type="chains" value="d=1-113"/>
</dbReference>
<dbReference type="PDB" id="6N8L">
    <property type="method" value="EM"/>
    <property type="resolution" value="3.60 A"/>
    <property type="chains" value="d=1-113"/>
</dbReference>
<dbReference type="PDB" id="6N8M">
    <property type="method" value="EM"/>
    <property type="resolution" value="3.50 A"/>
    <property type="chains" value="q=1-113"/>
</dbReference>
<dbReference type="PDB" id="6N8N">
    <property type="method" value="EM"/>
    <property type="resolution" value="3.80 A"/>
    <property type="chains" value="q=1-113"/>
</dbReference>
<dbReference type="PDB" id="6N8O">
    <property type="method" value="EM"/>
    <property type="resolution" value="3.50 A"/>
    <property type="chains" value="q=1-113"/>
</dbReference>
<dbReference type="PDB" id="6OIG">
    <property type="method" value="EM"/>
    <property type="resolution" value="3.80 A"/>
    <property type="chains" value="d=4-112"/>
</dbReference>
<dbReference type="PDB" id="6Q8Y">
    <property type="method" value="EM"/>
    <property type="resolution" value="3.10 A"/>
    <property type="chains" value="BC=4-112"/>
</dbReference>
<dbReference type="PDB" id="6QIK">
    <property type="method" value="EM"/>
    <property type="resolution" value="3.10 A"/>
    <property type="chains" value="d=1-113"/>
</dbReference>
<dbReference type="PDB" id="6QT0">
    <property type="method" value="EM"/>
    <property type="resolution" value="3.40 A"/>
    <property type="chains" value="d=1-113"/>
</dbReference>
<dbReference type="PDB" id="6QTZ">
    <property type="method" value="EM"/>
    <property type="resolution" value="3.50 A"/>
    <property type="chains" value="d=1-113"/>
</dbReference>
<dbReference type="PDB" id="6R84">
    <property type="method" value="EM"/>
    <property type="resolution" value="3.60 A"/>
    <property type="chains" value="f=4-112"/>
</dbReference>
<dbReference type="PDB" id="6R86">
    <property type="method" value="EM"/>
    <property type="resolution" value="3.40 A"/>
    <property type="chains" value="f=4-112"/>
</dbReference>
<dbReference type="PDB" id="6R87">
    <property type="method" value="EM"/>
    <property type="resolution" value="3.40 A"/>
    <property type="chains" value="f=4-112"/>
</dbReference>
<dbReference type="PDB" id="6RI5">
    <property type="method" value="EM"/>
    <property type="resolution" value="3.30 A"/>
    <property type="chains" value="d=1-113"/>
</dbReference>
<dbReference type="PDB" id="6RZZ">
    <property type="method" value="EM"/>
    <property type="resolution" value="3.20 A"/>
    <property type="chains" value="d=1-113"/>
</dbReference>
<dbReference type="PDB" id="6S05">
    <property type="method" value="EM"/>
    <property type="resolution" value="3.90 A"/>
    <property type="chains" value="d=1-113"/>
</dbReference>
<dbReference type="PDB" id="6S47">
    <property type="method" value="EM"/>
    <property type="resolution" value="3.28 A"/>
    <property type="chains" value="Af=2-113"/>
</dbReference>
<dbReference type="PDB" id="6SNT">
    <property type="method" value="EM"/>
    <property type="resolution" value="2.80 A"/>
    <property type="chains" value="am=1-113"/>
</dbReference>
<dbReference type="PDB" id="6SV4">
    <property type="method" value="EM"/>
    <property type="resolution" value="3.30 A"/>
    <property type="chains" value="BC/YC/ZC=1-113"/>
</dbReference>
<dbReference type="PDB" id="6T4Q">
    <property type="method" value="EM"/>
    <property type="resolution" value="2.60 A"/>
    <property type="chains" value="Ld=4-112"/>
</dbReference>
<dbReference type="PDB" id="6T7I">
    <property type="method" value="EM"/>
    <property type="resolution" value="3.20 A"/>
    <property type="chains" value="Ld=1-113"/>
</dbReference>
<dbReference type="PDB" id="6T7T">
    <property type="method" value="EM"/>
    <property type="resolution" value="3.10 A"/>
    <property type="chains" value="Ld=1-113"/>
</dbReference>
<dbReference type="PDB" id="6T83">
    <property type="method" value="EM"/>
    <property type="resolution" value="4.00 A"/>
    <property type="chains" value="O/dy=1-113"/>
</dbReference>
<dbReference type="PDB" id="6TB3">
    <property type="method" value="EM"/>
    <property type="resolution" value="2.80 A"/>
    <property type="chains" value="BC=4-112"/>
</dbReference>
<dbReference type="PDB" id="6TNU">
    <property type="method" value="EM"/>
    <property type="resolution" value="3.10 A"/>
    <property type="chains" value="BC=4-112"/>
</dbReference>
<dbReference type="PDB" id="6WOO">
    <property type="method" value="EM"/>
    <property type="resolution" value="2.90 A"/>
    <property type="chains" value="d=5-110"/>
</dbReference>
<dbReference type="PDB" id="6XIQ">
    <property type="method" value="EM"/>
    <property type="resolution" value="4.20 A"/>
    <property type="chains" value="d=1-113"/>
</dbReference>
<dbReference type="PDB" id="6XIR">
    <property type="method" value="EM"/>
    <property type="resolution" value="3.20 A"/>
    <property type="chains" value="d=1-113"/>
</dbReference>
<dbReference type="PDB" id="6YLG">
    <property type="method" value="EM"/>
    <property type="resolution" value="3.00 A"/>
    <property type="chains" value="d=1-113"/>
</dbReference>
<dbReference type="PDB" id="6YLH">
    <property type="method" value="EM"/>
    <property type="resolution" value="3.10 A"/>
    <property type="chains" value="d=1-113"/>
</dbReference>
<dbReference type="PDB" id="6YLX">
    <property type="method" value="EM"/>
    <property type="resolution" value="3.90 A"/>
    <property type="chains" value="d=1-113"/>
</dbReference>
<dbReference type="PDB" id="6YLY">
    <property type="method" value="EM"/>
    <property type="resolution" value="3.80 A"/>
    <property type="chains" value="d=1-113"/>
</dbReference>
<dbReference type="PDB" id="6Z6J">
    <property type="method" value="EM"/>
    <property type="resolution" value="3.40 A"/>
    <property type="chains" value="Ld=1-113"/>
</dbReference>
<dbReference type="PDB" id="6Z6K">
    <property type="method" value="EM"/>
    <property type="resolution" value="3.40 A"/>
    <property type="chains" value="Ld=1-113"/>
</dbReference>
<dbReference type="PDB" id="7AZY">
    <property type="method" value="EM"/>
    <property type="resolution" value="2.88 A"/>
    <property type="chains" value="n=1-113"/>
</dbReference>
<dbReference type="PDB" id="7B7D">
    <property type="method" value="EM"/>
    <property type="resolution" value="3.30 A"/>
    <property type="chains" value="LZ=4-112"/>
</dbReference>
<dbReference type="PDB" id="7BT6">
    <property type="method" value="EM"/>
    <property type="resolution" value="3.12 A"/>
    <property type="chains" value="d=1-113"/>
</dbReference>
<dbReference type="PDB" id="7BTB">
    <property type="method" value="EM"/>
    <property type="resolution" value="3.22 A"/>
    <property type="chains" value="d=1-113"/>
</dbReference>
<dbReference type="PDB" id="7MPI">
    <property type="method" value="EM"/>
    <property type="resolution" value="3.05 A"/>
    <property type="chains" value="Ad=4-112"/>
</dbReference>
<dbReference type="PDB" id="7MPJ">
    <property type="method" value="EM"/>
    <property type="resolution" value="2.70 A"/>
    <property type="chains" value="Ad=4-112"/>
</dbReference>
<dbReference type="PDB" id="7N8B">
    <property type="method" value="EM"/>
    <property type="resolution" value="3.05 A"/>
    <property type="chains" value="Ad=4-112"/>
</dbReference>
<dbReference type="PDB" id="7NAC">
    <property type="method" value="EM"/>
    <property type="resolution" value="3.04 A"/>
    <property type="chains" value="d=1-113"/>
</dbReference>
<dbReference type="PDB" id="7NAD">
    <property type="method" value="EM"/>
    <property type="resolution" value="3.04 A"/>
    <property type="chains" value="d=1-113"/>
</dbReference>
<dbReference type="PDB" id="7NAF">
    <property type="method" value="EM"/>
    <property type="resolution" value="3.13 A"/>
    <property type="chains" value="d=13-72"/>
</dbReference>
<dbReference type="PDB" id="7NRC">
    <property type="method" value="EM"/>
    <property type="resolution" value="3.90 A"/>
    <property type="chains" value="Lf=4-112"/>
</dbReference>
<dbReference type="PDB" id="7NRD">
    <property type="method" value="EM"/>
    <property type="resolution" value="4.36 A"/>
    <property type="chains" value="Lf=4-112"/>
</dbReference>
<dbReference type="PDB" id="7OF1">
    <property type="method" value="EM"/>
    <property type="resolution" value="3.10 A"/>
    <property type="chains" value="d=1-113"/>
</dbReference>
<dbReference type="PDB" id="7OH3">
    <property type="method" value="EM"/>
    <property type="resolution" value="3.40 A"/>
    <property type="chains" value="d=1-113"/>
</dbReference>
<dbReference type="PDB" id="7OHQ">
    <property type="method" value="EM"/>
    <property type="resolution" value="3.10 A"/>
    <property type="chains" value="d=1-113"/>
</dbReference>
<dbReference type="PDB" id="7OHR">
    <property type="method" value="EM"/>
    <property type="resolution" value="4.72 A"/>
    <property type="chains" value="d=1-113"/>
</dbReference>
<dbReference type="PDB" id="7OHV">
    <property type="method" value="EM"/>
    <property type="resolution" value="3.90 A"/>
    <property type="chains" value="d=1-113"/>
</dbReference>
<dbReference type="PDB" id="7R72">
    <property type="method" value="EM"/>
    <property type="resolution" value="3.07 A"/>
    <property type="chains" value="d=1-113"/>
</dbReference>
<dbReference type="PDB" id="7R7A">
    <property type="method" value="EM"/>
    <property type="resolution" value="3.04 A"/>
    <property type="chains" value="d=1-113"/>
</dbReference>
<dbReference type="PDB" id="7TOO">
    <property type="method" value="EM"/>
    <property type="resolution" value="2.70 A"/>
    <property type="chains" value="AL31=1-113"/>
</dbReference>
<dbReference type="PDB" id="7TOP">
    <property type="method" value="EM"/>
    <property type="resolution" value="2.40 A"/>
    <property type="chains" value="AL31=1-113"/>
</dbReference>
<dbReference type="PDB" id="7U0H">
    <property type="method" value="EM"/>
    <property type="resolution" value="2.76 A"/>
    <property type="chains" value="d=1-113"/>
</dbReference>
<dbReference type="PDB" id="7UG6">
    <property type="method" value="EM"/>
    <property type="resolution" value="2.90 A"/>
    <property type="chains" value="d=1-113"/>
</dbReference>
<dbReference type="PDB" id="7UOO">
    <property type="method" value="EM"/>
    <property type="resolution" value="2.34 A"/>
    <property type="chains" value="d=1-113"/>
</dbReference>
<dbReference type="PDB" id="7UQB">
    <property type="method" value="EM"/>
    <property type="resolution" value="2.43 A"/>
    <property type="chains" value="d=1-113"/>
</dbReference>
<dbReference type="PDB" id="7UQZ">
    <property type="method" value="EM"/>
    <property type="resolution" value="2.44 A"/>
    <property type="chains" value="d=1-113"/>
</dbReference>
<dbReference type="PDB" id="7V08">
    <property type="method" value="EM"/>
    <property type="resolution" value="2.36 A"/>
    <property type="chains" value="d=1-113"/>
</dbReference>
<dbReference type="PDB" id="7Z34">
    <property type="method" value="EM"/>
    <property type="resolution" value="3.80 A"/>
    <property type="chains" value="d=1-113"/>
</dbReference>
<dbReference type="PDB" id="7ZPQ">
    <property type="method" value="EM"/>
    <property type="resolution" value="3.47 A"/>
    <property type="chains" value="Bc=4-112"/>
</dbReference>
<dbReference type="PDB" id="7ZRS">
    <property type="method" value="EM"/>
    <property type="resolution" value="4.80 A"/>
    <property type="chains" value="Bc=4-112"/>
</dbReference>
<dbReference type="PDB" id="7ZS5">
    <property type="method" value="EM"/>
    <property type="resolution" value="3.20 A"/>
    <property type="chains" value="Be=4-112"/>
</dbReference>
<dbReference type="PDB" id="7ZUW">
    <property type="method" value="EM"/>
    <property type="resolution" value="4.30 A"/>
    <property type="chains" value="Bc=4-112"/>
</dbReference>
<dbReference type="PDB" id="7ZUX">
    <property type="method" value="EM"/>
    <property type="resolution" value="2.50 A"/>
    <property type="chains" value="Ec=4-112"/>
</dbReference>
<dbReference type="PDB" id="7ZW0">
    <property type="method" value="EM"/>
    <property type="resolution" value="2.40 A"/>
    <property type="chains" value="Lg=1-113"/>
</dbReference>
<dbReference type="PDB" id="8AAF">
    <property type="method" value="EM"/>
    <property type="resolution" value="2.50 A"/>
    <property type="chains" value="Q=1-113"/>
</dbReference>
<dbReference type="PDB" id="8AGT">
    <property type="method" value="EM"/>
    <property type="resolution" value="2.60 A"/>
    <property type="chains" value="Q=1-113"/>
</dbReference>
<dbReference type="PDB" id="8AGU">
    <property type="method" value="EM"/>
    <property type="resolution" value="2.70 A"/>
    <property type="chains" value="Q=1-113"/>
</dbReference>
<dbReference type="PDB" id="8AGV">
    <property type="method" value="EM"/>
    <property type="resolution" value="2.60 A"/>
    <property type="chains" value="Q=1-113"/>
</dbReference>
<dbReference type="PDB" id="8AGW">
    <property type="method" value="EM"/>
    <property type="resolution" value="2.60 A"/>
    <property type="chains" value="Q=1-113"/>
</dbReference>
<dbReference type="PDB" id="8AGX">
    <property type="method" value="EM"/>
    <property type="resolution" value="2.40 A"/>
    <property type="chains" value="Q=1-113"/>
</dbReference>
<dbReference type="PDB" id="8AGZ">
    <property type="method" value="EM"/>
    <property type="resolution" value="2.60 A"/>
    <property type="chains" value="Q=1-113"/>
</dbReference>
<dbReference type="PDB" id="8BIP">
    <property type="method" value="EM"/>
    <property type="resolution" value="3.10 A"/>
    <property type="chains" value="Ld=4-112"/>
</dbReference>
<dbReference type="PDB" id="8BJQ">
    <property type="method" value="EM"/>
    <property type="resolution" value="3.80 A"/>
    <property type="chains" value="Ld=4-112"/>
</dbReference>
<dbReference type="PDB" id="8BN3">
    <property type="method" value="EM"/>
    <property type="resolution" value="2.40 A"/>
    <property type="chains" value="O1=4-112"/>
</dbReference>
<dbReference type="PDB" id="8BQD">
    <property type="method" value="EM"/>
    <property type="resolution" value="3.90 A"/>
    <property type="chains" value="BC=4-112"/>
</dbReference>
<dbReference type="PDB" id="8BQX">
    <property type="method" value="EM"/>
    <property type="resolution" value="3.80 A"/>
    <property type="chains" value="BC=4-112"/>
</dbReference>
<dbReference type="PDB" id="8CCS">
    <property type="method" value="EM"/>
    <property type="resolution" value="1.97 A"/>
    <property type="chains" value="P=1-113"/>
</dbReference>
<dbReference type="PDB" id="8CDL">
    <property type="method" value="EM"/>
    <property type="resolution" value="2.72 A"/>
    <property type="chains" value="P=1-113"/>
</dbReference>
<dbReference type="PDB" id="8CDR">
    <property type="method" value="EM"/>
    <property type="resolution" value="2.04 A"/>
    <property type="chains" value="P=1-113"/>
</dbReference>
<dbReference type="PDB" id="8CEH">
    <property type="method" value="EM"/>
    <property type="resolution" value="2.05 A"/>
    <property type="chains" value="P=1-113"/>
</dbReference>
<dbReference type="PDB" id="8CF5">
    <property type="method" value="EM"/>
    <property type="resolution" value="2.71 A"/>
    <property type="chains" value="P=1-113"/>
</dbReference>
<dbReference type="PDB" id="8CG8">
    <property type="method" value="EM"/>
    <property type="resolution" value="2.57 A"/>
    <property type="chains" value="P=1-113"/>
</dbReference>
<dbReference type="PDB" id="8CGN">
    <property type="method" value="EM"/>
    <property type="resolution" value="2.28 A"/>
    <property type="chains" value="P=1-113"/>
</dbReference>
<dbReference type="PDB" id="8CIV">
    <property type="method" value="EM"/>
    <property type="resolution" value="2.47 A"/>
    <property type="chains" value="P=1-113"/>
</dbReference>
<dbReference type="PDB" id="8CKU">
    <property type="method" value="EM"/>
    <property type="resolution" value="3.11 A"/>
    <property type="chains" value="P=1-113"/>
</dbReference>
<dbReference type="PDB" id="8CMJ">
    <property type="method" value="EM"/>
    <property type="resolution" value="3.79 A"/>
    <property type="chains" value="P=1-113"/>
</dbReference>
<dbReference type="PDB" id="8EUB">
    <property type="method" value="EM"/>
    <property type="resolution" value="2.52 A"/>
    <property type="chains" value="Ad=1-113"/>
</dbReference>
<dbReference type="PDB" id="8EVP">
    <property type="method" value="EM"/>
    <property type="resolution" value="2.38 A"/>
    <property type="chains" value="Ad=1-113"/>
</dbReference>
<dbReference type="PDB" id="8EVQ">
    <property type="method" value="EM"/>
    <property type="resolution" value="2.72 A"/>
    <property type="chains" value="Ad=1-113"/>
</dbReference>
<dbReference type="PDB" id="8EVR">
    <property type="method" value="EM"/>
    <property type="resolution" value="2.87 A"/>
    <property type="chains" value="Ad=1-113"/>
</dbReference>
<dbReference type="PDB" id="8EVS">
    <property type="method" value="EM"/>
    <property type="resolution" value="2.62 A"/>
    <property type="chains" value="Ad=1-113"/>
</dbReference>
<dbReference type="PDB" id="8EVT">
    <property type="method" value="EM"/>
    <property type="resolution" value="2.20 A"/>
    <property type="chains" value="Ad=1-113"/>
</dbReference>
<dbReference type="PDB" id="8EWB">
    <property type="method" value="EM"/>
    <property type="resolution" value="2.87 A"/>
    <property type="chains" value="Ad=1-113"/>
</dbReference>
<dbReference type="PDB" id="8EWC">
    <property type="method" value="EM"/>
    <property type="resolution" value="2.45 A"/>
    <property type="chains" value="Ad=1-113"/>
</dbReference>
<dbReference type="PDB" id="8HFR">
    <property type="method" value="EM"/>
    <property type="resolution" value="2.64 A"/>
    <property type="chains" value="dG=1-113"/>
</dbReference>
<dbReference type="PDB" id="8K2D">
    <property type="method" value="EM"/>
    <property type="resolution" value="3.20 A"/>
    <property type="chains" value="Ld=1-113"/>
</dbReference>
<dbReference type="PDB" id="8K82">
    <property type="method" value="EM"/>
    <property type="resolution" value="3.00 A"/>
    <property type="chains" value="Ld=1-113"/>
</dbReference>
<dbReference type="PDB" id="8P4V">
    <property type="method" value="X-ray"/>
    <property type="resolution" value="3.16 A"/>
    <property type="chains" value="AE/DF=1-113"/>
</dbReference>
<dbReference type="PDB" id="8P8M">
    <property type="method" value="EM"/>
    <property type="resolution" value="2.66 A"/>
    <property type="chains" value="RD=1-113"/>
</dbReference>
<dbReference type="PDB" id="8P8N">
    <property type="method" value="EM"/>
    <property type="resolution" value="2.15 A"/>
    <property type="chains" value="RD=1-113"/>
</dbReference>
<dbReference type="PDB" id="8P8U">
    <property type="method" value="EM"/>
    <property type="resolution" value="2.23 A"/>
    <property type="chains" value="RD=1-113"/>
</dbReference>
<dbReference type="PDB" id="8P9A">
    <property type="method" value="X-ray"/>
    <property type="resolution" value="2.90 A"/>
    <property type="chains" value="AE/DF=1-113"/>
</dbReference>
<dbReference type="PDB" id="8PFR">
    <property type="method" value="EM"/>
    <property type="resolution" value="2.15 A"/>
    <property type="chains" value="RD=1-113"/>
</dbReference>
<dbReference type="PDB" id="8T2X">
    <property type="method" value="EM"/>
    <property type="resolution" value="2.46 A"/>
    <property type="chains" value="Ad=1-113"/>
</dbReference>
<dbReference type="PDB" id="8T2Y">
    <property type="method" value="EM"/>
    <property type="resolution" value="2.20 A"/>
    <property type="chains" value="Ad=1-113"/>
</dbReference>
<dbReference type="PDB" id="8T2Z">
    <property type="method" value="EM"/>
    <property type="resolution" value="2.40 A"/>
    <property type="chains" value="Ad=1-113"/>
</dbReference>
<dbReference type="PDB" id="8T30">
    <property type="method" value="EM"/>
    <property type="resolution" value="2.88 A"/>
    <property type="chains" value="Ad=1-113"/>
</dbReference>
<dbReference type="PDB" id="8T3A">
    <property type="method" value="EM"/>
    <property type="resolution" value="2.86 A"/>
    <property type="chains" value="Ad=1-113"/>
</dbReference>
<dbReference type="PDB" id="8T3B">
    <property type="method" value="EM"/>
    <property type="resolution" value="3.08 A"/>
    <property type="chains" value="Ad=1-113"/>
</dbReference>
<dbReference type="PDB" id="8T3C">
    <property type="method" value="EM"/>
    <property type="resolution" value="3.86 A"/>
    <property type="chains" value="Ad=1-113"/>
</dbReference>
<dbReference type="PDB" id="8T3D">
    <property type="method" value="EM"/>
    <property type="resolution" value="2.95 A"/>
    <property type="chains" value="Ad=1-113"/>
</dbReference>
<dbReference type="PDB" id="8T3E">
    <property type="method" value="EM"/>
    <property type="resolution" value="3.04 A"/>
    <property type="chains" value="Ad=1-113"/>
</dbReference>
<dbReference type="PDB" id="8T3F">
    <property type="method" value="EM"/>
    <property type="resolution" value="3.09 A"/>
    <property type="chains" value="Ad=1-113"/>
</dbReference>
<dbReference type="PDB" id="8UT0">
    <property type="method" value="EM"/>
    <property type="resolution" value="3.22 A"/>
    <property type="chains" value="Lf=4-112"/>
</dbReference>
<dbReference type="PDB" id="8UTI">
    <property type="method" value="EM"/>
    <property type="resolution" value="3.13 A"/>
    <property type="chains" value="Lf=4-112"/>
</dbReference>
<dbReference type="PDB" id="8V87">
    <property type="method" value="EM"/>
    <property type="resolution" value="2.66 A"/>
    <property type="chains" value="d=1-113"/>
</dbReference>
<dbReference type="PDB" id="8XU8">
    <property type="method" value="EM"/>
    <property type="resolution" value="3.40 A"/>
    <property type="chains" value="f=4-112"/>
</dbReference>
<dbReference type="PDB" id="8Y0U">
    <property type="method" value="EM"/>
    <property type="resolution" value="3.59 A"/>
    <property type="chains" value="Ld=1-113"/>
</dbReference>
<dbReference type="PDB" id="8YLD">
    <property type="method" value="EM"/>
    <property type="resolution" value="3.90 A"/>
    <property type="chains" value="f=4-112"/>
</dbReference>
<dbReference type="PDB" id="8YLR">
    <property type="method" value="EM"/>
    <property type="resolution" value="3.90 A"/>
    <property type="chains" value="f=4-112"/>
</dbReference>
<dbReference type="PDB" id="8Z70">
    <property type="method" value="EM"/>
    <property type="resolution" value="3.20 A"/>
    <property type="chains" value="f=4-112"/>
</dbReference>
<dbReference type="PDB" id="8Z71">
    <property type="method" value="EM"/>
    <property type="resolution" value="3.60 A"/>
    <property type="chains" value="f=4-112"/>
</dbReference>
<dbReference type="PDB" id="9F9S">
    <property type="method" value="EM"/>
    <property type="resolution" value="2.90 A"/>
    <property type="chains" value="Ln/Mn=1-113"/>
</dbReference>
<dbReference type="PDBsum" id="2WW9"/>
<dbReference type="PDBsum" id="2WWA"/>
<dbReference type="PDBsum" id="2WWB"/>
<dbReference type="PDBsum" id="3J6X"/>
<dbReference type="PDBsum" id="3J6Y"/>
<dbReference type="PDBsum" id="3J77"/>
<dbReference type="PDBsum" id="3J78"/>
<dbReference type="PDBsum" id="3JCT"/>
<dbReference type="PDBsum" id="4U3M"/>
<dbReference type="PDBsum" id="4U3N"/>
<dbReference type="PDBsum" id="4U3U"/>
<dbReference type="PDBsum" id="4U4N"/>
<dbReference type="PDBsum" id="4U4O"/>
<dbReference type="PDBsum" id="4U4Q"/>
<dbReference type="PDBsum" id="4U4R"/>
<dbReference type="PDBsum" id="4U4U"/>
<dbReference type="PDBsum" id="4U4Y"/>
<dbReference type="PDBsum" id="4U4Z"/>
<dbReference type="PDBsum" id="4U50"/>
<dbReference type="PDBsum" id="4U51"/>
<dbReference type="PDBsum" id="4U52"/>
<dbReference type="PDBsum" id="4U53"/>
<dbReference type="PDBsum" id="4U55"/>
<dbReference type="PDBsum" id="4U56"/>
<dbReference type="PDBsum" id="4U6F"/>
<dbReference type="PDBsum" id="4V4B"/>
<dbReference type="PDBsum" id="4V5Z"/>
<dbReference type="PDBsum" id="4V6I"/>
<dbReference type="PDBsum" id="4V7F"/>
<dbReference type="PDBsum" id="4V7R"/>
<dbReference type="PDBsum" id="4V88"/>
<dbReference type="PDBsum" id="4V8T"/>
<dbReference type="PDBsum" id="4V8Y"/>
<dbReference type="PDBsum" id="4V8Z"/>
<dbReference type="PDBsum" id="4V91"/>
<dbReference type="PDBsum" id="5APN"/>
<dbReference type="PDBsum" id="5APO"/>
<dbReference type="PDBsum" id="5DAT"/>
<dbReference type="PDBsum" id="5DC3"/>
<dbReference type="PDBsum" id="5DGE"/>
<dbReference type="PDBsum" id="5DGF"/>
<dbReference type="PDBsum" id="5DGV"/>
<dbReference type="PDBsum" id="5FCI"/>
<dbReference type="PDBsum" id="5FCJ"/>
<dbReference type="PDBsum" id="5GAK"/>
<dbReference type="PDBsum" id="5H4P"/>
<dbReference type="PDBsum" id="5I4L"/>
<dbReference type="PDBsum" id="5JCS"/>
<dbReference type="PDBsum" id="5JUO"/>
<dbReference type="PDBsum" id="5JUP"/>
<dbReference type="PDBsum" id="5JUS"/>
<dbReference type="PDBsum" id="5JUT"/>
<dbReference type="PDBsum" id="5JUU"/>
<dbReference type="PDBsum" id="5LYB"/>
<dbReference type="PDBsum" id="5M1J"/>
<dbReference type="PDBsum" id="5MC6"/>
<dbReference type="PDBsum" id="5MEI"/>
<dbReference type="PDBsum" id="5NDG"/>
<dbReference type="PDBsum" id="5NDV"/>
<dbReference type="PDBsum" id="5NDW"/>
<dbReference type="PDBsum" id="5OBM"/>
<dbReference type="PDBsum" id="5ON6"/>
<dbReference type="PDBsum" id="5T62"/>
<dbReference type="PDBsum" id="5T6R"/>
<dbReference type="PDBsum" id="5TBW"/>
<dbReference type="PDBsum" id="5TGA"/>
<dbReference type="PDBsum" id="5TGM"/>
<dbReference type="PDBsum" id="6ELZ"/>
<dbReference type="PDBsum" id="6EM5"/>
<dbReference type="PDBsum" id="6FT6"/>
<dbReference type="PDBsum" id="6GQ1"/>
<dbReference type="PDBsum" id="6GQB"/>
<dbReference type="PDBsum" id="6GQV"/>
<dbReference type="PDBsum" id="6HD7"/>
<dbReference type="PDBsum" id="6HHQ"/>
<dbReference type="PDBsum" id="6I7O"/>
<dbReference type="PDBsum" id="6M62"/>
<dbReference type="PDBsum" id="6N8J"/>
<dbReference type="PDBsum" id="6N8K"/>
<dbReference type="PDBsum" id="6N8L"/>
<dbReference type="PDBsum" id="6N8M"/>
<dbReference type="PDBsum" id="6N8N"/>
<dbReference type="PDBsum" id="6N8O"/>
<dbReference type="PDBsum" id="6OIG"/>
<dbReference type="PDBsum" id="6Q8Y"/>
<dbReference type="PDBsum" id="6QIK"/>
<dbReference type="PDBsum" id="6QT0"/>
<dbReference type="PDBsum" id="6QTZ"/>
<dbReference type="PDBsum" id="6R84"/>
<dbReference type="PDBsum" id="6R86"/>
<dbReference type="PDBsum" id="6R87"/>
<dbReference type="PDBsum" id="6RI5"/>
<dbReference type="PDBsum" id="6RZZ"/>
<dbReference type="PDBsum" id="6S05"/>
<dbReference type="PDBsum" id="6S47"/>
<dbReference type="PDBsum" id="6SNT"/>
<dbReference type="PDBsum" id="6SV4"/>
<dbReference type="PDBsum" id="6T4Q"/>
<dbReference type="PDBsum" id="6T7I"/>
<dbReference type="PDBsum" id="6T7T"/>
<dbReference type="PDBsum" id="6T83"/>
<dbReference type="PDBsum" id="6TB3"/>
<dbReference type="PDBsum" id="6TNU"/>
<dbReference type="PDBsum" id="6WOO"/>
<dbReference type="PDBsum" id="6XIQ"/>
<dbReference type="PDBsum" id="6XIR"/>
<dbReference type="PDBsum" id="6YLG"/>
<dbReference type="PDBsum" id="6YLH"/>
<dbReference type="PDBsum" id="6YLX"/>
<dbReference type="PDBsum" id="6YLY"/>
<dbReference type="PDBsum" id="6Z6J"/>
<dbReference type="PDBsum" id="6Z6K"/>
<dbReference type="PDBsum" id="7AZY"/>
<dbReference type="PDBsum" id="7B7D"/>
<dbReference type="PDBsum" id="7BT6"/>
<dbReference type="PDBsum" id="7BTB"/>
<dbReference type="PDBsum" id="7MPI"/>
<dbReference type="PDBsum" id="7MPJ"/>
<dbReference type="PDBsum" id="7N8B"/>
<dbReference type="PDBsum" id="7NAC"/>
<dbReference type="PDBsum" id="7NAD"/>
<dbReference type="PDBsum" id="7NAF"/>
<dbReference type="PDBsum" id="7NRC"/>
<dbReference type="PDBsum" id="7NRD"/>
<dbReference type="PDBsum" id="7OF1"/>
<dbReference type="PDBsum" id="7OH3"/>
<dbReference type="PDBsum" id="7OHQ"/>
<dbReference type="PDBsum" id="7OHR"/>
<dbReference type="PDBsum" id="7OHV"/>
<dbReference type="PDBsum" id="7R72"/>
<dbReference type="PDBsum" id="7R7A"/>
<dbReference type="PDBsum" id="7TOO"/>
<dbReference type="PDBsum" id="7TOP"/>
<dbReference type="PDBsum" id="7U0H"/>
<dbReference type="PDBsum" id="7UG6"/>
<dbReference type="PDBsum" id="7UOO"/>
<dbReference type="PDBsum" id="7UQB"/>
<dbReference type="PDBsum" id="7UQZ"/>
<dbReference type="PDBsum" id="7V08"/>
<dbReference type="PDBsum" id="7Z34"/>
<dbReference type="PDBsum" id="7ZPQ"/>
<dbReference type="PDBsum" id="7ZRS"/>
<dbReference type="PDBsum" id="7ZS5"/>
<dbReference type="PDBsum" id="7ZUW"/>
<dbReference type="PDBsum" id="7ZUX"/>
<dbReference type="PDBsum" id="7ZW0"/>
<dbReference type="PDBsum" id="8AAF"/>
<dbReference type="PDBsum" id="8AGT"/>
<dbReference type="PDBsum" id="8AGU"/>
<dbReference type="PDBsum" id="8AGV"/>
<dbReference type="PDBsum" id="8AGW"/>
<dbReference type="PDBsum" id="8AGX"/>
<dbReference type="PDBsum" id="8AGZ"/>
<dbReference type="PDBsum" id="8BIP"/>
<dbReference type="PDBsum" id="8BJQ"/>
<dbReference type="PDBsum" id="8BN3"/>
<dbReference type="PDBsum" id="8BQD"/>
<dbReference type="PDBsum" id="8BQX"/>
<dbReference type="PDBsum" id="8CCS"/>
<dbReference type="PDBsum" id="8CDL"/>
<dbReference type="PDBsum" id="8CDR"/>
<dbReference type="PDBsum" id="8CEH"/>
<dbReference type="PDBsum" id="8CF5"/>
<dbReference type="PDBsum" id="8CG8"/>
<dbReference type="PDBsum" id="8CGN"/>
<dbReference type="PDBsum" id="8CIV"/>
<dbReference type="PDBsum" id="8CKU"/>
<dbReference type="PDBsum" id="8CMJ"/>
<dbReference type="PDBsum" id="8EUB"/>
<dbReference type="PDBsum" id="8EVP"/>
<dbReference type="PDBsum" id="8EVQ"/>
<dbReference type="PDBsum" id="8EVR"/>
<dbReference type="PDBsum" id="8EVS"/>
<dbReference type="PDBsum" id="8EVT"/>
<dbReference type="PDBsum" id="8EWB"/>
<dbReference type="PDBsum" id="8EWC"/>
<dbReference type="PDBsum" id="8HFR"/>
<dbReference type="PDBsum" id="8K2D"/>
<dbReference type="PDBsum" id="8K82"/>
<dbReference type="PDBsum" id="8P4V"/>
<dbReference type="PDBsum" id="8P8M"/>
<dbReference type="PDBsum" id="8P8N"/>
<dbReference type="PDBsum" id="8P8U"/>
<dbReference type="PDBsum" id="8P9A"/>
<dbReference type="PDBsum" id="8PFR"/>
<dbReference type="PDBsum" id="8T2X"/>
<dbReference type="PDBsum" id="8T2Y"/>
<dbReference type="PDBsum" id="8T2Z"/>
<dbReference type="PDBsum" id="8T30"/>
<dbReference type="PDBsum" id="8T3A"/>
<dbReference type="PDBsum" id="8T3B"/>
<dbReference type="PDBsum" id="8T3C"/>
<dbReference type="PDBsum" id="8T3D"/>
<dbReference type="PDBsum" id="8T3E"/>
<dbReference type="PDBsum" id="8T3F"/>
<dbReference type="PDBsum" id="8UT0"/>
<dbReference type="PDBsum" id="8UTI"/>
<dbReference type="PDBsum" id="8V87"/>
<dbReference type="PDBsum" id="8XU8"/>
<dbReference type="PDBsum" id="8Y0U"/>
<dbReference type="PDBsum" id="8YLD"/>
<dbReference type="PDBsum" id="8YLR"/>
<dbReference type="PDBsum" id="8Z70"/>
<dbReference type="PDBsum" id="8Z71"/>
<dbReference type="PDBsum" id="9F9S"/>
<dbReference type="EMDB" id="EMD-0047"/>
<dbReference type="EMDB" id="EMD-0048"/>
<dbReference type="EMDB" id="EMD-0049"/>
<dbReference type="EMDB" id="EMD-0202"/>
<dbReference type="EMDB" id="EMD-0369"/>
<dbReference type="EMDB" id="EMD-0370"/>
<dbReference type="EMDB" id="EMD-0371"/>
<dbReference type="EMDB" id="EMD-0372"/>
<dbReference type="EMDB" id="EMD-0373"/>
<dbReference type="EMDB" id="EMD-0374"/>
<dbReference type="EMDB" id="EMD-10068"/>
<dbReference type="EMDB" id="EMD-10071"/>
<dbReference type="EMDB" id="EMD-10098"/>
<dbReference type="EMDB" id="EMD-10262"/>
<dbReference type="EMDB" id="EMD-10315"/>
<dbReference type="EMDB" id="EMD-10377"/>
<dbReference type="EMDB" id="EMD-10396"/>
<dbReference type="EMDB" id="EMD-10397"/>
<dbReference type="EMDB" id="EMD-10398"/>
<dbReference type="EMDB" id="EMD-10431"/>
<dbReference type="EMDB" id="EMD-10537"/>
<dbReference type="EMDB" id="EMD-10838"/>
<dbReference type="EMDB" id="EMD-10839"/>
<dbReference type="EMDB" id="EMD-10841"/>
<dbReference type="EMDB" id="EMD-10842"/>
<dbReference type="EMDB" id="EMD-11096"/>
<dbReference type="EMDB" id="EMD-11097"/>
<dbReference type="EMDB" id="EMD-11951"/>
<dbReference type="EMDB" id="EMD-12081"/>
<dbReference type="EMDB" id="EMD-12534"/>
<dbReference type="EMDB" id="EMD-12535"/>
<dbReference type="EMDB" id="EMD-12866"/>
<dbReference type="EMDB" id="EMD-12892"/>
<dbReference type="EMDB" id="EMD-12905"/>
<dbReference type="EMDB" id="EMD-12906"/>
<dbReference type="EMDB" id="EMD-12910"/>
<dbReference type="EMDB" id="EMD-14471"/>
<dbReference type="EMDB" id="EMD-14861"/>
<dbReference type="EMDB" id="EMD-14921"/>
<dbReference type="EMDB" id="EMD-14926"/>
<dbReference type="EMDB" id="EMD-14978"/>
<dbReference type="EMDB" id="EMD-14979"/>
<dbReference type="EMDB" id="EMD-14990"/>
<dbReference type="EMDB" id="EMD-15296"/>
<dbReference type="EMDB" id="EMD-15423"/>
<dbReference type="EMDB" id="EMD-15424"/>
<dbReference type="EMDB" id="EMD-15425"/>
<dbReference type="EMDB" id="EMD-15426"/>
<dbReference type="EMDB" id="EMD-15427"/>
<dbReference type="EMDB" id="EMD-15428"/>
<dbReference type="EMDB" id="EMD-16086"/>
<dbReference type="EMDB" id="EMD-16090"/>
<dbReference type="EMDB" id="EMD-16127"/>
<dbReference type="EMDB" id="EMD-16182"/>
<dbReference type="EMDB" id="EMD-16191"/>
<dbReference type="EMDB" id="EMD-16563"/>
<dbReference type="EMDB" id="EMD-16591"/>
<dbReference type="EMDB" id="EMD-16594"/>
<dbReference type="EMDB" id="EMD-16609"/>
<dbReference type="EMDB" id="EMD-16616"/>
<dbReference type="EMDB" id="EMD-16634"/>
<dbReference type="EMDB" id="EMD-16648"/>
<dbReference type="EMDB" id="EMD-16684"/>
<dbReference type="EMDB" id="EMD-16702"/>
<dbReference type="EMDB" id="EMD-16729"/>
<dbReference type="EMDB" id="EMD-17549"/>
<dbReference type="EMDB" id="EMD-17550"/>
<dbReference type="EMDB" id="EMD-17552"/>
<dbReference type="EMDB" id="EMD-17653"/>
<dbReference type="EMDB" id="EMD-20077"/>
<dbReference type="EMDB" id="EMD-21859"/>
<dbReference type="EMDB" id="EMD-22196"/>
<dbReference type="EMDB" id="EMD-22198"/>
<dbReference type="EMDB" id="EMD-23934"/>
<dbReference type="EMDB" id="EMD-23935"/>
<dbReference type="EMDB" id="EMD-24235"/>
<dbReference type="EMDB" id="EMD-24269"/>
<dbReference type="EMDB" id="EMD-24270"/>
<dbReference type="EMDB" id="EMD-24271"/>
<dbReference type="EMDB" id="EMD-24290"/>
<dbReference type="EMDB" id="EMD-24296"/>
<dbReference type="EMDB" id="EMD-26033"/>
<dbReference type="EMDB" id="EMD-26034"/>
<dbReference type="EMDB" id="EMD-26259"/>
<dbReference type="EMDB" id="EMD-26485"/>
<dbReference type="EMDB" id="EMD-26651"/>
<dbReference type="EMDB" id="EMD-26686"/>
<dbReference type="EMDB" id="EMD-26703"/>
<dbReference type="EMDB" id="EMD-26941"/>
<dbReference type="EMDB" id="EMD-28610"/>
<dbReference type="EMDB" id="EMD-28632"/>
<dbReference type="EMDB" id="EMD-28633"/>
<dbReference type="EMDB" id="EMD-28634"/>
<dbReference type="EMDB" id="EMD-28635"/>
<dbReference type="EMDB" id="EMD-28636"/>
<dbReference type="EMDB" id="EMD-28642"/>
<dbReference type="EMDB" id="EMD-28643"/>
<dbReference type="EMDB" id="EMD-30108"/>
<dbReference type="EMDB" id="EMD-30170"/>
<dbReference type="EMDB" id="EMD-30174"/>
<dbReference type="EMDB" id="EMD-3461"/>
<dbReference type="EMDB" id="EMD-34725"/>
<dbReference type="EMDB" id="EMD-36839"/>
<dbReference type="EMDB" id="EMD-36945"/>
<dbReference type="EMDB" id="EMD-38660"/>
<dbReference type="EMDB" id="EMD-40990"/>
<dbReference type="EMDB" id="EMD-40991"/>
<dbReference type="EMDB" id="EMD-40992"/>
<dbReference type="EMDB" id="EMD-40993"/>
<dbReference type="EMDB" id="EMD-40997"/>
<dbReference type="EMDB" id="EMD-40998"/>
<dbReference type="EMDB" id="EMD-40999"/>
<dbReference type="EMDB" id="EMD-41000"/>
<dbReference type="EMDB" id="EMD-41001"/>
<dbReference type="EMDB" id="EMD-41002"/>
<dbReference type="EMDB" id="EMD-4140"/>
<dbReference type="EMDB" id="EMD-42525"/>
<dbReference type="EMDB" id="EMD-42540"/>
<dbReference type="EMDB" id="EMD-4302"/>
<dbReference type="EMDB" id="EMD-43027"/>
<dbReference type="EMDB" id="EMD-4427"/>
<dbReference type="EMDB" id="EMD-4474"/>
<dbReference type="EMDB" id="EMD-4560"/>
<dbReference type="EMDB" id="EMD-4630"/>
<dbReference type="EMDB" id="EMD-4636"/>
<dbReference type="EMDB" id="EMD-4751"/>
<dbReference type="EMDB" id="EMD-4752"/>
<dbReference type="EMDB" id="EMD-4753"/>
<dbReference type="EMDB" id="EMD-4884"/>
<dbReference type="EMDB" id="EMD-50259"/>
<dbReference type="EMDB" id="EMD-8362"/>
<dbReference type="EMDB" id="EMD-8368"/>
<dbReference type="SMR" id="P0C2H8"/>
<dbReference type="BioGRID" id="31986">
    <property type="interactions" value="635"/>
</dbReference>
<dbReference type="ComplexPortal" id="CPX-1601">
    <property type="entry name" value="60S cytosolic large ribosomal subunit"/>
</dbReference>
<dbReference type="DIP" id="DIP-5135N"/>
<dbReference type="FunCoup" id="P0C2H8">
    <property type="interactions" value="1131"/>
</dbReference>
<dbReference type="IntAct" id="P0C2H8">
    <property type="interactions" value="83"/>
</dbReference>
<dbReference type="MINT" id="P0C2H8"/>
<dbReference type="STRING" id="4932.YDL075W"/>
<dbReference type="CarbonylDB" id="P0C2H8"/>
<dbReference type="iPTMnet" id="P0C2H8"/>
<dbReference type="PaxDb" id="4932-YDL075W"/>
<dbReference type="PeptideAtlas" id="P0C2H8"/>
<dbReference type="TopDownProteomics" id="P0C2H8"/>
<dbReference type="EnsemblFungi" id="YDL075W_mRNA">
    <property type="protein sequence ID" value="YDL075W"/>
    <property type="gene ID" value="YDL075W"/>
</dbReference>
<dbReference type="GeneID" id="851484"/>
<dbReference type="KEGG" id="sce:YDL075W"/>
<dbReference type="AGR" id="SGD:S000002233"/>
<dbReference type="SGD" id="S000002233">
    <property type="gene designation" value="RPL31A"/>
</dbReference>
<dbReference type="VEuPathDB" id="FungiDB:YDL075W"/>
<dbReference type="eggNOG" id="KOG0893">
    <property type="taxonomic scope" value="Eukaryota"/>
</dbReference>
<dbReference type="GeneTree" id="ENSGT00950000183030"/>
<dbReference type="HOGENOM" id="CLU_112570_1_1_1"/>
<dbReference type="InParanoid" id="P0C2H8"/>
<dbReference type="OMA" id="FKTGCHY"/>
<dbReference type="OrthoDB" id="9739313at2759"/>
<dbReference type="BioCyc" id="YEAST:G3O-29486-MONOMER"/>
<dbReference type="Reactome" id="R-SCE-156827">
    <property type="pathway name" value="L13a-mediated translational silencing of Ceruloplasmin expression"/>
</dbReference>
<dbReference type="Reactome" id="R-SCE-1799339">
    <property type="pathway name" value="SRP-dependent cotranslational protein targeting to membrane"/>
</dbReference>
<dbReference type="Reactome" id="R-SCE-72689">
    <property type="pathway name" value="Formation of a pool of free 40S subunits"/>
</dbReference>
<dbReference type="Reactome" id="R-SCE-72706">
    <property type="pathway name" value="GTP hydrolysis and joining of the 60S ribosomal subunit"/>
</dbReference>
<dbReference type="Reactome" id="R-SCE-975956">
    <property type="pathway name" value="Nonsense Mediated Decay (NMD) independent of the Exon Junction Complex (EJC)"/>
</dbReference>
<dbReference type="Reactome" id="R-SCE-975957">
    <property type="pathway name" value="Nonsense Mediated Decay (NMD) enhanced by the Exon Junction Complex (EJC)"/>
</dbReference>
<dbReference type="BioGRID-ORCS" id="851484">
    <property type="hits" value="3 hits in 10 CRISPR screens"/>
</dbReference>
<dbReference type="CD-CODE" id="E03F929F">
    <property type="entry name" value="Stress granule"/>
</dbReference>
<dbReference type="EvolutionaryTrace" id="P0C2H8"/>
<dbReference type="PRO" id="PR:P0C2H8"/>
<dbReference type="Proteomes" id="UP000002311">
    <property type="component" value="Chromosome IV"/>
</dbReference>
<dbReference type="RNAct" id="P0C2H8">
    <property type="molecule type" value="protein"/>
</dbReference>
<dbReference type="GO" id="GO:0005829">
    <property type="term" value="C:cytosol"/>
    <property type="evidence" value="ECO:0000304"/>
    <property type="project" value="Reactome"/>
</dbReference>
<dbReference type="GO" id="GO:0022625">
    <property type="term" value="C:cytosolic large ribosomal subunit"/>
    <property type="evidence" value="ECO:0000314"/>
    <property type="project" value="SGD"/>
</dbReference>
<dbReference type="GO" id="GO:0003735">
    <property type="term" value="F:structural constituent of ribosome"/>
    <property type="evidence" value="ECO:0000314"/>
    <property type="project" value="SGD"/>
</dbReference>
<dbReference type="GO" id="GO:0002181">
    <property type="term" value="P:cytoplasmic translation"/>
    <property type="evidence" value="ECO:0000314"/>
    <property type="project" value="SGD"/>
</dbReference>
<dbReference type="GO" id="GO:0006450">
    <property type="term" value="P:regulation of translational fidelity"/>
    <property type="evidence" value="ECO:0000315"/>
    <property type="project" value="SGD"/>
</dbReference>
<dbReference type="CDD" id="cd00463">
    <property type="entry name" value="Ribosomal_L31e"/>
    <property type="match status" value="1"/>
</dbReference>
<dbReference type="FunFam" id="3.10.440.10:FF:000001">
    <property type="entry name" value="60S ribosomal protein L31"/>
    <property type="match status" value="1"/>
</dbReference>
<dbReference type="Gene3D" id="3.10.440.10">
    <property type="match status" value="1"/>
</dbReference>
<dbReference type="InterPro" id="IPR000054">
    <property type="entry name" value="Ribosomal_eL31"/>
</dbReference>
<dbReference type="InterPro" id="IPR020052">
    <property type="entry name" value="Ribosomal_eL31_CS"/>
</dbReference>
<dbReference type="InterPro" id="IPR023621">
    <property type="entry name" value="Ribosomal_eL31_dom_sf"/>
</dbReference>
<dbReference type="PANTHER" id="PTHR10956">
    <property type="entry name" value="60S RIBOSOMAL PROTEIN L31"/>
    <property type="match status" value="1"/>
</dbReference>
<dbReference type="PANTHER" id="PTHR10956:SF0">
    <property type="entry name" value="60S RIBOSOMAL PROTEIN L31"/>
    <property type="match status" value="1"/>
</dbReference>
<dbReference type="Pfam" id="PF01198">
    <property type="entry name" value="Ribosomal_L31e"/>
    <property type="match status" value="1"/>
</dbReference>
<dbReference type="SMART" id="SM01380">
    <property type="entry name" value="Ribosomal_L31e"/>
    <property type="match status" value="1"/>
</dbReference>
<dbReference type="SUPFAM" id="SSF54575">
    <property type="entry name" value="Ribosomal protein L31e"/>
    <property type="match status" value="1"/>
</dbReference>
<dbReference type="PROSITE" id="PS01144">
    <property type="entry name" value="RIBOSOMAL_L31E"/>
    <property type="match status" value="1"/>
</dbReference>